<dbReference type="EC" id="2.4.99.17" evidence="1"/>
<dbReference type="EMBL" id="CP000362">
    <property type="protein sequence ID" value="ABG32517.1"/>
    <property type="molecule type" value="Genomic_DNA"/>
</dbReference>
<dbReference type="RefSeq" id="WP_011569133.1">
    <property type="nucleotide sequence ID" value="NC_008209.1"/>
</dbReference>
<dbReference type="SMR" id="Q164S6"/>
<dbReference type="STRING" id="375451.RD1_2998"/>
<dbReference type="KEGG" id="rde:RD1_2998"/>
<dbReference type="eggNOG" id="COG0809">
    <property type="taxonomic scope" value="Bacteria"/>
</dbReference>
<dbReference type="HOGENOM" id="CLU_039110_1_1_5"/>
<dbReference type="OrthoDB" id="9805933at2"/>
<dbReference type="UniPathway" id="UPA00392"/>
<dbReference type="Proteomes" id="UP000007029">
    <property type="component" value="Chromosome"/>
</dbReference>
<dbReference type="GO" id="GO:0005737">
    <property type="term" value="C:cytoplasm"/>
    <property type="evidence" value="ECO:0007669"/>
    <property type="project" value="UniProtKB-SubCell"/>
</dbReference>
<dbReference type="GO" id="GO:0051075">
    <property type="term" value="F:S-adenosylmethionine:tRNA ribosyltransferase-isomerase activity"/>
    <property type="evidence" value="ECO:0007669"/>
    <property type="project" value="UniProtKB-EC"/>
</dbReference>
<dbReference type="GO" id="GO:0008616">
    <property type="term" value="P:queuosine biosynthetic process"/>
    <property type="evidence" value="ECO:0007669"/>
    <property type="project" value="UniProtKB-UniRule"/>
</dbReference>
<dbReference type="GO" id="GO:0002099">
    <property type="term" value="P:tRNA wobble guanine modification"/>
    <property type="evidence" value="ECO:0007669"/>
    <property type="project" value="TreeGrafter"/>
</dbReference>
<dbReference type="FunFam" id="3.40.1780.10:FF:000001">
    <property type="entry name" value="S-adenosylmethionine:tRNA ribosyltransferase-isomerase"/>
    <property type="match status" value="1"/>
</dbReference>
<dbReference type="Gene3D" id="2.40.10.240">
    <property type="entry name" value="QueA-like"/>
    <property type="match status" value="1"/>
</dbReference>
<dbReference type="Gene3D" id="3.40.1780.10">
    <property type="entry name" value="QueA-like"/>
    <property type="match status" value="1"/>
</dbReference>
<dbReference type="HAMAP" id="MF_00113">
    <property type="entry name" value="QueA"/>
    <property type="match status" value="1"/>
</dbReference>
<dbReference type="InterPro" id="IPR003699">
    <property type="entry name" value="QueA"/>
</dbReference>
<dbReference type="InterPro" id="IPR042118">
    <property type="entry name" value="QueA_dom1"/>
</dbReference>
<dbReference type="InterPro" id="IPR042119">
    <property type="entry name" value="QueA_dom2"/>
</dbReference>
<dbReference type="InterPro" id="IPR036100">
    <property type="entry name" value="QueA_sf"/>
</dbReference>
<dbReference type="NCBIfam" id="NF001140">
    <property type="entry name" value="PRK00147.1"/>
    <property type="match status" value="1"/>
</dbReference>
<dbReference type="NCBIfam" id="TIGR00113">
    <property type="entry name" value="queA"/>
    <property type="match status" value="1"/>
</dbReference>
<dbReference type="PANTHER" id="PTHR30307">
    <property type="entry name" value="S-ADENOSYLMETHIONINE:TRNA RIBOSYLTRANSFERASE-ISOMERASE"/>
    <property type="match status" value="1"/>
</dbReference>
<dbReference type="PANTHER" id="PTHR30307:SF0">
    <property type="entry name" value="S-ADENOSYLMETHIONINE:TRNA RIBOSYLTRANSFERASE-ISOMERASE"/>
    <property type="match status" value="1"/>
</dbReference>
<dbReference type="Pfam" id="PF02547">
    <property type="entry name" value="Queuosine_synth"/>
    <property type="match status" value="1"/>
</dbReference>
<dbReference type="SUPFAM" id="SSF111337">
    <property type="entry name" value="QueA-like"/>
    <property type="match status" value="1"/>
</dbReference>
<reference key="1">
    <citation type="journal article" date="2007" name="J. Bacteriol.">
        <title>The complete genome sequence of Roseobacter denitrificans reveals a mixotrophic rather than photosynthetic metabolism.</title>
        <authorList>
            <person name="Swingley W.D."/>
            <person name="Sadekar S."/>
            <person name="Mastrian S.D."/>
            <person name="Matthies H.J."/>
            <person name="Hao J."/>
            <person name="Ramos H."/>
            <person name="Acharya C.R."/>
            <person name="Conrad A.L."/>
            <person name="Taylor H.L."/>
            <person name="Dejesa L.C."/>
            <person name="Shah M.K."/>
            <person name="O'Huallachain M.E."/>
            <person name="Lince M.T."/>
            <person name="Blankenship R.E."/>
            <person name="Beatty J.T."/>
            <person name="Touchman J.W."/>
        </authorList>
    </citation>
    <scope>NUCLEOTIDE SEQUENCE [LARGE SCALE GENOMIC DNA]</scope>
    <source>
        <strain>ATCC 33942 / OCh 114</strain>
    </source>
</reference>
<evidence type="ECO:0000255" key="1">
    <source>
        <dbReference type="HAMAP-Rule" id="MF_00113"/>
    </source>
</evidence>
<name>QUEA_ROSDO</name>
<comment type="function">
    <text evidence="1">Transfers and isomerizes the ribose moiety from AdoMet to the 7-aminomethyl group of 7-deazaguanine (preQ1-tRNA) to give epoxyqueuosine (oQ-tRNA).</text>
</comment>
<comment type="catalytic activity">
    <reaction evidence="1">
        <text>7-aminomethyl-7-carbaguanosine(34) in tRNA + S-adenosyl-L-methionine = epoxyqueuosine(34) in tRNA + adenine + L-methionine + 2 H(+)</text>
        <dbReference type="Rhea" id="RHEA:32155"/>
        <dbReference type="Rhea" id="RHEA-COMP:10342"/>
        <dbReference type="Rhea" id="RHEA-COMP:18582"/>
        <dbReference type="ChEBI" id="CHEBI:15378"/>
        <dbReference type="ChEBI" id="CHEBI:16708"/>
        <dbReference type="ChEBI" id="CHEBI:57844"/>
        <dbReference type="ChEBI" id="CHEBI:59789"/>
        <dbReference type="ChEBI" id="CHEBI:82833"/>
        <dbReference type="ChEBI" id="CHEBI:194443"/>
        <dbReference type="EC" id="2.4.99.17"/>
    </reaction>
</comment>
<comment type="pathway">
    <text evidence="1">tRNA modification; tRNA-queuosine biosynthesis.</text>
</comment>
<comment type="subunit">
    <text evidence="1">Monomer.</text>
</comment>
<comment type="subcellular location">
    <subcellularLocation>
        <location evidence="1">Cytoplasm</location>
    </subcellularLocation>
</comment>
<comment type="similarity">
    <text evidence="1">Belongs to the QueA family.</text>
</comment>
<keyword id="KW-0963">Cytoplasm</keyword>
<keyword id="KW-0671">Queuosine biosynthesis</keyword>
<keyword id="KW-1185">Reference proteome</keyword>
<keyword id="KW-0949">S-adenosyl-L-methionine</keyword>
<keyword id="KW-0808">Transferase</keyword>
<accession>Q164S6</accession>
<gene>
    <name evidence="1" type="primary">queA</name>
    <name type="ordered locus">RD1_2998</name>
</gene>
<protein>
    <recommendedName>
        <fullName evidence="1">S-adenosylmethionine:tRNA ribosyltransferase-isomerase</fullName>
        <ecNumber evidence="1">2.4.99.17</ecNumber>
    </recommendedName>
    <alternativeName>
        <fullName evidence="1">Queuosine biosynthesis protein QueA</fullName>
    </alternativeName>
</protein>
<feature type="chain" id="PRO_1000015264" description="S-adenosylmethionine:tRNA ribosyltransferase-isomerase">
    <location>
        <begin position="1"/>
        <end position="351"/>
    </location>
</feature>
<organism>
    <name type="scientific">Roseobacter denitrificans (strain ATCC 33942 / OCh 114)</name>
    <name type="common">Erythrobacter sp. (strain OCh 114)</name>
    <name type="synonym">Roseobacter denitrificans</name>
    <dbReference type="NCBI Taxonomy" id="375451"/>
    <lineage>
        <taxon>Bacteria</taxon>
        <taxon>Pseudomonadati</taxon>
        <taxon>Pseudomonadota</taxon>
        <taxon>Alphaproteobacteria</taxon>
        <taxon>Rhodobacterales</taxon>
        <taxon>Roseobacteraceae</taxon>
        <taxon>Roseobacter</taxon>
    </lineage>
</organism>
<proteinExistence type="inferred from homology"/>
<sequence>MKLSDFDFDLPEDLIATRPAVPRTSARLLVAKGRQISDSIVSDLPNWLSPGDRLVLNDTRVIPARLTGARHRDTAQGPMQARIEVTLLEPDAQGNWSALIKPLKKVKIAEEIIFSDRLRATLRAVKDGQGVLQFNLEGDDFDAALNAAGAMPLPPYIATRRPADERDKSDYQTVFAQNSGAVAAPTASLHFDKALLSELAARGVLFSYVTLHVGAGTFLPVKVEDVTTHKMHAEWGQVSAAAAAEINATKQAGKRVIPVGTTALRLIETAGREGQIKAWEGDTDIFIYPGFRFNVADALMTNFHLPKSTLMMLVSALMGYDEVRAIYDHAVAEKYRFFSYGDASLLIPQRD</sequence>